<proteinExistence type="evidence at transcript level"/>
<name>CAZA2_PIG</name>
<sequence>MADLEEQLSDEEKVRIAAKFIIHAPPGEFNEVFNDVRLLLNNDNLLREGAAHAFAQYNLDQFTPVKIEGYEDQVLITEHGDLGNGKFLDPKNRICFKFDHLRKEATDPRPYEAENAVESWRTSVETALRAYVKEHYPNGVCTVYGKKIDGQQTIIACIESHQFQAKNFWNGRWRSEWKFTITPSTTQVVGILKIQVHYYEDGNVQLVSHKDIQDSLTVSNEVQTAKEFIKIVEAAENEYQTAISENYQTMSDTTFKALRRQLPVTRTKIDWNKILSYKIGKEMQNA</sequence>
<reference key="1">
    <citation type="journal article" date="2003" name="Nature">
        <title>Comparative analyses of multi-species sequences from targeted genomic regions.</title>
        <authorList>
            <person name="Thomas J.W."/>
            <person name="Touchman J.W."/>
            <person name="Blakesley R.W."/>
            <person name="Bouffard G.G."/>
            <person name="Beckstrom-Sternberg S.M."/>
            <person name="Margulies E.H."/>
            <person name="Blanchette M."/>
            <person name="Siepel A.C."/>
            <person name="Thomas P.J."/>
            <person name="McDowell J.C."/>
            <person name="Maskeri B."/>
            <person name="Hansen N.F."/>
            <person name="Schwartz M.S."/>
            <person name="Weber R.J."/>
            <person name="Kent W.J."/>
            <person name="Karolchik D."/>
            <person name="Bruen T.C."/>
            <person name="Bevan R."/>
            <person name="Cutler D.J."/>
            <person name="Schwartz S."/>
            <person name="Elnitski L."/>
            <person name="Idol J.R."/>
            <person name="Prasad A.B."/>
            <person name="Lee-Lin S.-Q."/>
            <person name="Maduro V.V.B."/>
            <person name="Summers T.J."/>
            <person name="Portnoy M.E."/>
            <person name="Dietrich N.L."/>
            <person name="Akhter N."/>
            <person name="Ayele K."/>
            <person name="Benjamin B."/>
            <person name="Cariaga K."/>
            <person name="Brinkley C.P."/>
            <person name="Brooks S.Y."/>
            <person name="Granite S."/>
            <person name="Guan X."/>
            <person name="Gupta J."/>
            <person name="Haghighi P."/>
            <person name="Ho S.-L."/>
            <person name="Huang M.C."/>
            <person name="Karlins E."/>
            <person name="Laric P.L."/>
            <person name="Legaspi R."/>
            <person name="Lim M.J."/>
            <person name="Maduro Q.L."/>
            <person name="Masiello C.A."/>
            <person name="Mastrian S.D."/>
            <person name="McCloskey J.C."/>
            <person name="Pearson R."/>
            <person name="Stantripop S."/>
            <person name="Tiongson E.E."/>
            <person name="Tran J.T."/>
            <person name="Tsurgeon C."/>
            <person name="Vogt J.L."/>
            <person name="Walker M.A."/>
            <person name="Wetherby K.D."/>
            <person name="Wiggins L.S."/>
            <person name="Young A.C."/>
            <person name="Zhang L.-H."/>
            <person name="Osoegawa K."/>
            <person name="Zhu B."/>
            <person name="Zhao B."/>
            <person name="Shu C.L."/>
            <person name="De Jong P.J."/>
            <person name="Lawrence C.E."/>
            <person name="Smit A.F."/>
            <person name="Chakravarti A."/>
            <person name="Haussler D."/>
            <person name="Green P."/>
            <person name="Miller W."/>
            <person name="Green E.D."/>
        </authorList>
    </citation>
    <scope>NUCLEOTIDE SEQUENCE [LARGE SCALE GENOMIC DNA]</scope>
</reference>
<reference key="2">
    <citation type="journal article" date="1996" name="Mamm. Genome">
        <title>Evaluation and characterization of a porcine small intestine cDNA library: analysis of 839 clones.</title>
        <authorList>
            <person name="Winteroe A.K."/>
            <person name="Fredholm M."/>
            <person name="Davies W."/>
        </authorList>
    </citation>
    <scope>NUCLEOTIDE SEQUENCE [LARGE SCALE MRNA] OF 3-120</scope>
    <source>
        <tissue>Small intestine</tissue>
    </source>
</reference>
<feature type="initiator methionine" description="Removed" evidence="2">
    <location>
        <position position="1"/>
    </location>
</feature>
<feature type="chain" id="PRO_0000208629" description="F-actin-capping protein subunit alpha-2">
    <location>
        <begin position="2"/>
        <end position="286"/>
    </location>
</feature>
<feature type="modified residue" description="N-acetylalanine" evidence="2">
    <location>
        <position position="2"/>
    </location>
</feature>
<feature type="modified residue" description="Phosphoserine" evidence="2">
    <location>
        <position position="9"/>
    </location>
</feature>
<gene>
    <name type="primary">CAPZA2</name>
</gene>
<keyword id="KW-0007">Acetylation</keyword>
<keyword id="KW-0117">Actin capping</keyword>
<keyword id="KW-0009">Actin-binding</keyword>
<keyword id="KW-0597">Phosphoprotein</keyword>
<keyword id="KW-1185">Reference proteome</keyword>
<dbReference type="EMBL" id="DP000017">
    <property type="protein sequence ID" value="AAR16302.1"/>
    <property type="molecule type" value="Genomic_DNA"/>
</dbReference>
<dbReference type="EMBL" id="F14812">
    <property type="protein sequence ID" value="CAA23271.1"/>
    <property type="molecule type" value="mRNA"/>
</dbReference>
<dbReference type="SMR" id="Q29221"/>
<dbReference type="FunCoup" id="Q29221">
    <property type="interactions" value="2141"/>
</dbReference>
<dbReference type="STRING" id="9823.ENSSSCP00000063158"/>
<dbReference type="PaxDb" id="9823-ENSSSCP00000017617"/>
<dbReference type="PeptideAtlas" id="Q29221"/>
<dbReference type="Ensembl" id="ENSSSCT00000075839.2">
    <property type="protein sequence ID" value="ENSSSCP00000063158.1"/>
    <property type="gene ID" value="ENSSSCG00000028113.4"/>
</dbReference>
<dbReference type="Ensembl" id="ENSSSCT00015003348.1">
    <property type="protein sequence ID" value="ENSSSCP00015001122.1"/>
    <property type="gene ID" value="ENSSSCG00015002098.1"/>
</dbReference>
<dbReference type="Ensembl" id="ENSSSCT00025096217.1">
    <property type="protein sequence ID" value="ENSSSCP00025042244.1"/>
    <property type="gene ID" value="ENSSSCG00025069838.1"/>
</dbReference>
<dbReference type="Ensembl" id="ENSSSCT00030075508.1">
    <property type="protein sequence ID" value="ENSSSCP00030034505.1"/>
    <property type="gene ID" value="ENSSSCG00030053901.1"/>
</dbReference>
<dbReference type="Ensembl" id="ENSSSCT00035027043.1">
    <property type="protein sequence ID" value="ENSSSCP00035010331.1"/>
    <property type="gene ID" value="ENSSSCG00035020711.1"/>
</dbReference>
<dbReference type="Ensembl" id="ENSSSCT00040051751.1">
    <property type="protein sequence ID" value="ENSSSCP00040021471.1"/>
    <property type="gene ID" value="ENSSSCG00040037335.1"/>
</dbReference>
<dbReference type="Ensembl" id="ENSSSCT00045032998.1">
    <property type="protein sequence ID" value="ENSSSCP00045022876.1"/>
    <property type="gene ID" value="ENSSSCG00045019208.1"/>
</dbReference>
<dbReference type="Ensembl" id="ENSSSCT00050058492.1">
    <property type="protein sequence ID" value="ENSSSCP00050025057.1"/>
    <property type="gene ID" value="ENSSSCG00050042950.1"/>
</dbReference>
<dbReference type="Ensembl" id="ENSSSCT00055039662.1">
    <property type="protein sequence ID" value="ENSSSCP00055031548.1"/>
    <property type="gene ID" value="ENSSSCG00055019992.1"/>
</dbReference>
<dbReference type="Ensembl" id="ENSSSCT00060096581.1">
    <property type="protein sequence ID" value="ENSSSCP00060041822.1"/>
    <property type="gene ID" value="ENSSSCG00060070343.1"/>
</dbReference>
<dbReference type="Ensembl" id="ENSSSCT00065100934.1">
    <property type="protein sequence ID" value="ENSSSCP00065044415.1"/>
    <property type="gene ID" value="ENSSSCG00065073005.1"/>
</dbReference>
<dbReference type="Ensembl" id="ENSSSCT00070057569.1">
    <property type="protein sequence ID" value="ENSSSCP00070048944.1"/>
    <property type="gene ID" value="ENSSSCG00070028688.1"/>
</dbReference>
<dbReference type="Ensembl" id="ENSSSCT00085001767">
    <property type="protein sequence ID" value="ENSSSCP00085001290"/>
    <property type="gene ID" value="ENSSSCG00085001222"/>
</dbReference>
<dbReference type="Ensembl" id="ENSSSCT00090001170">
    <property type="protein sequence ID" value="ENSSSCP00090000611"/>
    <property type="gene ID" value="ENSSSCG00090000767"/>
</dbReference>
<dbReference type="Ensembl" id="ENSSSCT00105013840">
    <property type="protein sequence ID" value="ENSSSCP00105010092"/>
    <property type="gene ID" value="ENSSSCG00105006723"/>
</dbReference>
<dbReference type="Ensembl" id="ENSSSCT00110068959">
    <property type="protein sequence ID" value="ENSSSCP00110048566"/>
    <property type="gene ID" value="ENSSSCG00110036230"/>
</dbReference>
<dbReference type="Ensembl" id="ENSSSCT00115019937">
    <property type="protein sequence ID" value="ENSSSCP00115018870"/>
    <property type="gene ID" value="ENSSSCG00115011161"/>
</dbReference>
<dbReference type="Ensembl" id="ENSSSCT00130000275">
    <property type="protein sequence ID" value="ENSSSCP00130000128"/>
    <property type="gene ID" value="ENSSSCG00130000212"/>
</dbReference>
<dbReference type="VGNC" id="VGNC:103910">
    <property type="gene designation" value="CAPZA2"/>
</dbReference>
<dbReference type="eggNOG" id="KOG0836">
    <property type="taxonomic scope" value="Eukaryota"/>
</dbReference>
<dbReference type="GeneTree" id="ENSGT00950000183119"/>
<dbReference type="HOGENOM" id="CLU_045161_0_0_1"/>
<dbReference type="InParanoid" id="Q29221"/>
<dbReference type="OMA" id="VACIEDH"/>
<dbReference type="TreeFam" id="TF314822"/>
<dbReference type="Reactome" id="R-SSC-2132295">
    <property type="pathway name" value="MHC class II antigen presentation"/>
</dbReference>
<dbReference type="Reactome" id="R-SSC-3371497">
    <property type="pathway name" value="HSP90 chaperone cycle for steroid hormone receptors (SHR) in the presence of ligand"/>
</dbReference>
<dbReference type="Reactome" id="R-SSC-6807878">
    <property type="pathway name" value="COPI-mediated anterograde transport"/>
</dbReference>
<dbReference type="Reactome" id="R-SSC-879415">
    <property type="pathway name" value="Advanced glycosylation endproduct receptor signaling"/>
</dbReference>
<dbReference type="Reactome" id="R-SSC-983231">
    <property type="pathway name" value="Factors involved in megakaryocyte development and platelet production"/>
</dbReference>
<dbReference type="Proteomes" id="UP000008227">
    <property type="component" value="Chromosome 18"/>
</dbReference>
<dbReference type="Proteomes" id="UP000314985">
    <property type="component" value="Chromosome 18"/>
</dbReference>
<dbReference type="Proteomes" id="UP000694570">
    <property type="component" value="Unplaced"/>
</dbReference>
<dbReference type="Proteomes" id="UP000694571">
    <property type="component" value="Unplaced"/>
</dbReference>
<dbReference type="Proteomes" id="UP000694720">
    <property type="component" value="Unplaced"/>
</dbReference>
<dbReference type="Proteomes" id="UP000694722">
    <property type="component" value="Unplaced"/>
</dbReference>
<dbReference type="Proteomes" id="UP000694723">
    <property type="component" value="Unplaced"/>
</dbReference>
<dbReference type="Proteomes" id="UP000694724">
    <property type="component" value="Unplaced"/>
</dbReference>
<dbReference type="Proteomes" id="UP000694725">
    <property type="component" value="Unplaced"/>
</dbReference>
<dbReference type="Proteomes" id="UP000694726">
    <property type="component" value="Unplaced"/>
</dbReference>
<dbReference type="Proteomes" id="UP000694727">
    <property type="component" value="Unplaced"/>
</dbReference>
<dbReference type="Proteomes" id="UP000694728">
    <property type="component" value="Unplaced"/>
</dbReference>
<dbReference type="Bgee" id="ENSSSCG00000028113">
    <property type="expression patterns" value="Expressed in muscle tissue and 45 other cell types or tissues"/>
</dbReference>
<dbReference type="ExpressionAtlas" id="Q29221">
    <property type="expression patterns" value="baseline and differential"/>
</dbReference>
<dbReference type="GO" id="GO:0030863">
    <property type="term" value="C:cortical cytoskeleton"/>
    <property type="evidence" value="ECO:0000318"/>
    <property type="project" value="GO_Central"/>
</dbReference>
<dbReference type="GO" id="GO:0008290">
    <property type="term" value="C:F-actin capping protein complex"/>
    <property type="evidence" value="ECO:0000318"/>
    <property type="project" value="GO_Central"/>
</dbReference>
<dbReference type="GO" id="GO:0051015">
    <property type="term" value="F:actin filament binding"/>
    <property type="evidence" value="ECO:0000318"/>
    <property type="project" value="GO_Central"/>
</dbReference>
<dbReference type="GO" id="GO:0030036">
    <property type="term" value="P:actin cytoskeleton organization"/>
    <property type="evidence" value="ECO:0000318"/>
    <property type="project" value="GO_Central"/>
</dbReference>
<dbReference type="GO" id="GO:0051016">
    <property type="term" value="P:barbed-end actin filament capping"/>
    <property type="evidence" value="ECO:0000318"/>
    <property type="project" value="GO_Central"/>
</dbReference>
<dbReference type="FunFam" id="3.30.1140.60:FF:000001">
    <property type="entry name" value="F-actin-capping protein subunit alpha"/>
    <property type="match status" value="1"/>
</dbReference>
<dbReference type="FunFam" id="3.90.1150.210:FF:000002">
    <property type="entry name" value="F-actin-capping protein subunit alpha"/>
    <property type="match status" value="1"/>
</dbReference>
<dbReference type="Gene3D" id="3.30.1140.60">
    <property type="entry name" value="F-actin capping protein, alpha subunit"/>
    <property type="match status" value="1"/>
</dbReference>
<dbReference type="Gene3D" id="3.90.1150.210">
    <property type="entry name" value="F-actin capping protein, beta subunit"/>
    <property type="match status" value="1"/>
</dbReference>
<dbReference type="InterPro" id="IPR002189">
    <property type="entry name" value="CapZ_alpha"/>
</dbReference>
<dbReference type="InterPro" id="IPR037282">
    <property type="entry name" value="CapZ_alpha/beta"/>
</dbReference>
<dbReference type="InterPro" id="IPR042276">
    <property type="entry name" value="CapZ_alpha/beta_2"/>
</dbReference>
<dbReference type="InterPro" id="IPR042489">
    <property type="entry name" value="CapZ_alpha_1"/>
</dbReference>
<dbReference type="InterPro" id="IPR017865">
    <property type="entry name" value="F-actin_cap_asu_CS"/>
</dbReference>
<dbReference type="PANTHER" id="PTHR10653">
    <property type="entry name" value="F-ACTIN-CAPPING PROTEIN SUBUNIT ALPHA"/>
    <property type="match status" value="1"/>
</dbReference>
<dbReference type="PANTHER" id="PTHR10653:SF2">
    <property type="entry name" value="F-ACTIN-CAPPING PROTEIN SUBUNIT ALPHA-2"/>
    <property type="match status" value="1"/>
</dbReference>
<dbReference type="Pfam" id="PF01267">
    <property type="entry name" value="F-actin_cap_A"/>
    <property type="match status" value="1"/>
</dbReference>
<dbReference type="PRINTS" id="PR00191">
    <property type="entry name" value="FACTINCAPA"/>
</dbReference>
<dbReference type="SUPFAM" id="SSF90096">
    <property type="entry name" value="Subunits of heterodimeric actin filament capping protein Capz"/>
    <property type="match status" value="1"/>
</dbReference>
<dbReference type="PROSITE" id="PS00748">
    <property type="entry name" value="F_ACTIN_CAPPING_A_1"/>
    <property type="match status" value="1"/>
</dbReference>
<dbReference type="PROSITE" id="PS00749">
    <property type="entry name" value="F_ACTIN_CAPPING_A_2"/>
    <property type="match status" value="1"/>
</dbReference>
<accession>Q29221</accession>
<accession>Q2QLD9</accession>
<protein>
    <recommendedName>
        <fullName>F-actin-capping protein subunit alpha-2</fullName>
    </recommendedName>
    <alternativeName>
        <fullName>CapZ alpha-2</fullName>
    </alternativeName>
</protein>
<organism>
    <name type="scientific">Sus scrofa</name>
    <name type="common">Pig</name>
    <dbReference type="NCBI Taxonomy" id="9823"/>
    <lineage>
        <taxon>Eukaryota</taxon>
        <taxon>Metazoa</taxon>
        <taxon>Chordata</taxon>
        <taxon>Craniata</taxon>
        <taxon>Vertebrata</taxon>
        <taxon>Euteleostomi</taxon>
        <taxon>Mammalia</taxon>
        <taxon>Eutheria</taxon>
        <taxon>Laurasiatheria</taxon>
        <taxon>Artiodactyla</taxon>
        <taxon>Suina</taxon>
        <taxon>Suidae</taxon>
        <taxon>Sus</taxon>
    </lineage>
</organism>
<comment type="function">
    <text evidence="1">F-actin-capping proteins bind in a Ca(2+)-independent manner to the fast growing ends of actin filaments (barbed end) thereby blocking the exchange of subunits at these ends. Unlike other capping proteins (such as gelsolin and severin), these proteins do not sever actin filaments (By similarity).</text>
</comment>
<comment type="subunit">
    <text evidence="1 2">Component of the F-actin capping complex, composed of a heterodimer of an alpha and a beta subunit. Component of the WASH complex, composed of F-actin-capping protein subunit alpha (CAPZA1, CAPZA2 or CAPZA3), F-actin-capping protein subunit beta (CAPZB), WASHC1, WASHC2, WASHC3, WASHC4 and WASHC5. Interacts with RCSD1/CAPZIP (By similarity). Directly interacts with CRACD; this interaction decreases binding to actin (By similarity).</text>
</comment>
<comment type="similarity">
    <text evidence="3">Belongs to the F-actin-capping protein alpha subunit family.</text>
</comment>
<evidence type="ECO:0000250" key="1"/>
<evidence type="ECO:0000250" key="2">
    <source>
        <dbReference type="UniProtKB" id="P47755"/>
    </source>
</evidence>
<evidence type="ECO:0000305" key="3"/>